<protein>
    <recommendedName>
        <fullName evidence="1">Small ribosomal subunit protein uS19c</fullName>
    </recommendedName>
    <alternativeName>
        <fullName evidence="2">30S ribosomal protein S19, chloroplastic</fullName>
    </alternativeName>
</protein>
<proteinExistence type="inferred from homology"/>
<reference key="1">
    <citation type="submission" date="2008-03" db="EMBL/GenBank/DDBJ databases">
        <title>Guizotia abyssinica chloroplast sequenced using Solexa.</title>
        <authorList>
            <person name="Kane N.C."/>
            <person name="Dempewolf H."/>
            <person name="Stewart M.L."/>
            <person name="Cronk Q."/>
            <person name="Rieseberrg L.H."/>
        </authorList>
    </citation>
    <scope>NUCLEOTIDE SEQUENCE [LARGE SCALE GENOMIC DNA]</scope>
    <source>
        <strain>cv. PI 508077</strain>
    </source>
</reference>
<geneLocation type="chloroplast"/>
<accession>B2LMN4</accession>
<evidence type="ECO:0000255" key="1">
    <source>
        <dbReference type="HAMAP-Rule" id="MF_00531"/>
    </source>
</evidence>
<evidence type="ECO:0000305" key="2"/>
<gene>
    <name evidence="1" type="primary">rps19</name>
    <name type="ordered locus">GuabCp063</name>
</gene>
<sequence length="92" mass="10558">MTRSLKKNPFVANNLLKKINKLNTKEEKEIIITWSRASTIIPIMVGHTIAIHNGKEHLPIYITDRMVGHKLGEFAPTLNFRGHAKSDNRSRR</sequence>
<comment type="function">
    <text evidence="1">Protein S19 forms a complex with S13 that binds strongly to the 16S ribosomal RNA.</text>
</comment>
<comment type="subcellular location">
    <subcellularLocation>
        <location>Plastid</location>
        <location>Chloroplast</location>
    </subcellularLocation>
</comment>
<comment type="similarity">
    <text evidence="1">Belongs to the universal ribosomal protein uS19 family.</text>
</comment>
<name>RR19_GUIAB</name>
<keyword id="KW-0150">Chloroplast</keyword>
<keyword id="KW-0934">Plastid</keyword>
<keyword id="KW-0687">Ribonucleoprotein</keyword>
<keyword id="KW-0689">Ribosomal protein</keyword>
<keyword id="KW-0694">RNA-binding</keyword>
<keyword id="KW-0699">rRNA-binding</keyword>
<feature type="chain" id="PRO_0000354354" description="Small ribosomal subunit protein uS19c">
    <location>
        <begin position="1"/>
        <end position="92"/>
    </location>
</feature>
<dbReference type="EMBL" id="EU549769">
    <property type="protein sequence ID" value="ACB86567.1"/>
    <property type="molecule type" value="Genomic_DNA"/>
</dbReference>
<dbReference type="RefSeq" id="YP_001837401.1">
    <property type="nucleotide sequence ID" value="NC_010601.1"/>
</dbReference>
<dbReference type="SMR" id="B2LMN4"/>
<dbReference type="GeneID" id="6219102"/>
<dbReference type="GO" id="GO:0009507">
    <property type="term" value="C:chloroplast"/>
    <property type="evidence" value="ECO:0007669"/>
    <property type="project" value="UniProtKB-SubCell"/>
</dbReference>
<dbReference type="GO" id="GO:0005763">
    <property type="term" value="C:mitochondrial small ribosomal subunit"/>
    <property type="evidence" value="ECO:0007669"/>
    <property type="project" value="TreeGrafter"/>
</dbReference>
<dbReference type="GO" id="GO:0019843">
    <property type="term" value="F:rRNA binding"/>
    <property type="evidence" value="ECO:0007669"/>
    <property type="project" value="UniProtKB-UniRule"/>
</dbReference>
<dbReference type="GO" id="GO:0003735">
    <property type="term" value="F:structural constituent of ribosome"/>
    <property type="evidence" value="ECO:0007669"/>
    <property type="project" value="InterPro"/>
</dbReference>
<dbReference type="GO" id="GO:0000028">
    <property type="term" value="P:ribosomal small subunit assembly"/>
    <property type="evidence" value="ECO:0007669"/>
    <property type="project" value="TreeGrafter"/>
</dbReference>
<dbReference type="GO" id="GO:0006412">
    <property type="term" value="P:translation"/>
    <property type="evidence" value="ECO:0007669"/>
    <property type="project" value="UniProtKB-UniRule"/>
</dbReference>
<dbReference type="FunFam" id="3.30.860.10:FF:000001">
    <property type="entry name" value="30S ribosomal protein S19"/>
    <property type="match status" value="1"/>
</dbReference>
<dbReference type="Gene3D" id="3.30.860.10">
    <property type="entry name" value="30s Ribosomal Protein S19, Chain A"/>
    <property type="match status" value="1"/>
</dbReference>
<dbReference type="HAMAP" id="MF_00531">
    <property type="entry name" value="Ribosomal_uS19"/>
    <property type="match status" value="1"/>
</dbReference>
<dbReference type="InterPro" id="IPR002222">
    <property type="entry name" value="Ribosomal_uS19"/>
</dbReference>
<dbReference type="InterPro" id="IPR005732">
    <property type="entry name" value="Ribosomal_uS19_bac-type"/>
</dbReference>
<dbReference type="InterPro" id="IPR020934">
    <property type="entry name" value="Ribosomal_uS19_CS"/>
</dbReference>
<dbReference type="InterPro" id="IPR023575">
    <property type="entry name" value="Ribosomal_uS19_SF"/>
</dbReference>
<dbReference type="NCBIfam" id="TIGR01050">
    <property type="entry name" value="rpsS_bact"/>
    <property type="match status" value="1"/>
</dbReference>
<dbReference type="PANTHER" id="PTHR11880">
    <property type="entry name" value="RIBOSOMAL PROTEIN S19P FAMILY MEMBER"/>
    <property type="match status" value="1"/>
</dbReference>
<dbReference type="PANTHER" id="PTHR11880:SF8">
    <property type="entry name" value="SMALL RIBOSOMAL SUBUNIT PROTEIN US19M"/>
    <property type="match status" value="1"/>
</dbReference>
<dbReference type="Pfam" id="PF00203">
    <property type="entry name" value="Ribosomal_S19"/>
    <property type="match status" value="1"/>
</dbReference>
<dbReference type="PIRSF" id="PIRSF002144">
    <property type="entry name" value="Ribosomal_S19"/>
    <property type="match status" value="1"/>
</dbReference>
<dbReference type="PRINTS" id="PR00975">
    <property type="entry name" value="RIBOSOMALS19"/>
</dbReference>
<dbReference type="SUPFAM" id="SSF54570">
    <property type="entry name" value="Ribosomal protein S19"/>
    <property type="match status" value="1"/>
</dbReference>
<dbReference type="PROSITE" id="PS00323">
    <property type="entry name" value="RIBOSOMAL_S19"/>
    <property type="match status" value="1"/>
</dbReference>
<organism>
    <name type="scientific">Guizotia abyssinica</name>
    <name type="common">Niger</name>
    <name type="synonym">Ramtilla</name>
    <dbReference type="NCBI Taxonomy" id="4230"/>
    <lineage>
        <taxon>Eukaryota</taxon>
        <taxon>Viridiplantae</taxon>
        <taxon>Streptophyta</taxon>
        <taxon>Embryophyta</taxon>
        <taxon>Tracheophyta</taxon>
        <taxon>Spermatophyta</taxon>
        <taxon>Magnoliopsida</taxon>
        <taxon>eudicotyledons</taxon>
        <taxon>Gunneridae</taxon>
        <taxon>Pentapetalae</taxon>
        <taxon>asterids</taxon>
        <taxon>campanulids</taxon>
        <taxon>Asterales</taxon>
        <taxon>Asteraceae</taxon>
        <taxon>Asteroideae</taxon>
        <taxon>Heliantheae alliance</taxon>
        <taxon>Millerieae</taxon>
        <taxon>Guizotia</taxon>
    </lineage>
</organism>